<accession>B5FFX7</accession>
<evidence type="ECO:0000255" key="1">
    <source>
        <dbReference type="HAMAP-Rule" id="MF_01038"/>
    </source>
</evidence>
<gene>
    <name evidence="1" type="primary">gpmI</name>
    <name type="ordered locus">VFMJ11_0193</name>
</gene>
<organism>
    <name type="scientific">Aliivibrio fischeri (strain MJ11)</name>
    <name type="common">Vibrio fischeri</name>
    <dbReference type="NCBI Taxonomy" id="388396"/>
    <lineage>
        <taxon>Bacteria</taxon>
        <taxon>Pseudomonadati</taxon>
        <taxon>Pseudomonadota</taxon>
        <taxon>Gammaproteobacteria</taxon>
        <taxon>Vibrionales</taxon>
        <taxon>Vibrionaceae</taxon>
        <taxon>Aliivibrio</taxon>
    </lineage>
</organism>
<keyword id="KW-0324">Glycolysis</keyword>
<keyword id="KW-0413">Isomerase</keyword>
<keyword id="KW-0464">Manganese</keyword>
<keyword id="KW-0479">Metal-binding</keyword>
<proteinExistence type="inferred from homology"/>
<name>GPMI_ALIFM</name>
<comment type="function">
    <text evidence="1">Catalyzes the interconversion of 2-phosphoglycerate and 3-phosphoglycerate.</text>
</comment>
<comment type="catalytic activity">
    <reaction evidence="1">
        <text>(2R)-2-phosphoglycerate = (2R)-3-phosphoglycerate</text>
        <dbReference type="Rhea" id="RHEA:15901"/>
        <dbReference type="ChEBI" id="CHEBI:58272"/>
        <dbReference type="ChEBI" id="CHEBI:58289"/>
        <dbReference type="EC" id="5.4.2.12"/>
    </reaction>
</comment>
<comment type="cofactor">
    <cofactor evidence="1">
        <name>Mn(2+)</name>
        <dbReference type="ChEBI" id="CHEBI:29035"/>
    </cofactor>
    <text evidence="1">Binds 2 manganese ions per subunit.</text>
</comment>
<comment type="pathway">
    <text evidence="1">Carbohydrate degradation; glycolysis; pyruvate from D-glyceraldehyde 3-phosphate: step 3/5.</text>
</comment>
<comment type="subunit">
    <text evidence="1">Monomer.</text>
</comment>
<comment type="similarity">
    <text evidence="1">Belongs to the BPG-independent phosphoglycerate mutase family.</text>
</comment>
<feature type="chain" id="PRO_1000135911" description="2,3-bisphosphoglycerate-independent phosphoglycerate mutase">
    <location>
        <begin position="1"/>
        <end position="510"/>
    </location>
</feature>
<feature type="active site" description="Phosphoserine intermediate" evidence="1">
    <location>
        <position position="63"/>
    </location>
</feature>
<feature type="binding site" evidence="1">
    <location>
        <position position="13"/>
    </location>
    <ligand>
        <name>Mn(2+)</name>
        <dbReference type="ChEBI" id="CHEBI:29035"/>
        <label>2</label>
    </ligand>
</feature>
<feature type="binding site" evidence="1">
    <location>
        <position position="63"/>
    </location>
    <ligand>
        <name>Mn(2+)</name>
        <dbReference type="ChEBI" id="CHEBI:29035"/>
        <label>2</label>
    </ligand>
</feature>
<feature type="binding site" evidence="1">
    <location>
        <position position="124"/>
    </location>
    <ligand>
        <name>substrate</name>
    </ligand>
</feature>
<feature type="binding site" evidence="1">
    <location>
        <begin position="154"/>
        <end position="155"/>
    </location>
    <ligand>
        <name>substrate</name>
    </ligand>
</feature>
<feature type="binding site" evidence="1">
    <location>
        <position position="186"/>
    </location>
    <ligand>
        <name>substrate</name>
    </ligand>
</feature>
<feature type="binding site" evidence="1">
    <location>
        <position position="192"/>
    </location>
    <ligand>
        <name>substrate</name>
    </ligand>
</feature>
<feature type="binding site" evidence="1">
    <location>
        <begin position="262"/>
        <end position="265"/>
    </location>
    <ligand>
        <name>substrate</name>
    </ligand>
</feature>
<feature type="binding site" evidence="1">
    <location>
        <position position="334"/>
    </location>
    <ligand>
        <name>substrate</name>
    </ligand>
</feature>
<feature type="binding site" evidence="1">
    <location>
        <position position="401"/>
    </location>
    <ligand>
        <name>Mn(2+)</name>
        <dbReference type="ChEBI" id="CHEBI:29035"/>
        <label>1</label>
    </ligand>
</feature>
<feature type="binding site" evidence="1">
    <location>
        <position position="405"/>
    </location>
    <ligand>
        <name>Mn(2+)</name>
        <dbReference type="ChEBI" id="CHEBI:29035"/>
        <label>1</label>
    </ligand>
</feature>
<feature type="binding site" evidence="1">
    <location>
        <position position="442"/>
    </location>
    <ligand>
        <name>Mn(2+)</name>
        <dbReference type="ChEBI" id="CHEBI:29035"/>
        <label>2</label>
    </ligand>
</feature>
<feature type="binding site" evidence="1">
    <location>
        <position position="443"/>
    </location>
    <ligand>
        <name>Mn(2+)</name>
        <dbReference type="ChEBI" id="CHEBI:29035"/>
        <label>2</label>
    </ligand>
</feature>
<feature type="binding site" evidence="1">
    <location>
        <position position="461"/>
    </location>
    <ligand>
        <name>Mn(2+)</name>
        <dbReference type="ChEBI" id="CHEBI:29035"/>
        <label>1</label>
    </ligand>
</feature>
<reference key="1">
    <citation type="submission" date="2008-08" db="EMBL/GenBank/DDBJ databases">
        <title>Complete sequence of Vibrio fischeri strain MJ11.</title>
        <authorList>
            <person name="Mandel M.J."/>
            <person name="Stabb E.V."/>
            <person name="Ruby E.G."/>
            <person name="Ferriera S."/>
            <person name="Johnson J."/>
            <person name="Kravitz S."/>
            <person name="Beeson K."/>
            <person name="Sutton G."/>
            <person name="Rogers Y.-H."/>
            <person name="Friedman R."/>
            <person name="Frazier M."/>
            <person name="Venter J.C."/>
        </authorList>
    </citation>
    <scope>NUCLEOTIDE SEQUENCE [LARGE SCALE GENOMIC DNA]</scope>
    <source>
        <strain>MJ11</strain>
    </source>
</reference>
<dbReference type="EC" id="5.4.2.12" evidence="1"/>
<dbReference type="EMBL" id="CP001139">
    <property type="protein sequence ID" value="ACH65011.1"/>
    <property type="molecule type" value="Genomic_DNA"/>
</dbReference>
<dbReference type="RefSeq" id="WP_012532768.1">
    <property type="nucleotide sequence ID" value="NC_011184.1"/>
</dbReference>
<dbReference type="SMR" id="B5FFX7"/>
<dbReference type="KEGG" id="vfm:VFMJ11_0193"/>
<dbReference type="HOGENOM" id="CLU_026099_2_0_6"/>
<dbReference type="UniPathway" id="UPA00109">
    <property type="reaction ID" value="UER00186"/>
</dbReference>
<dbReference type="Proteomes" id="UP000001857">
    <property type="component" value="Chromosome I"/>
</dbReference>
<dbReference type="GO" id="GO:0005829">
    <property type="term" value="C:cytosol"/>
    <property type="evidence" value="ECO:0007669"/>
    <property type="project" value="TreeGrafter"/>
</dbReference>
<dbReference type="GO" id="GO:0030145">
    <property type="term" value="F:manganese ion binding"/>
    <property type="evidence" value="ECO:0007669"/>
    <property type="project" value="UniProtKB-UniRule"/>
</dbReference>
<dbReference type="GO" id="GO:0004619">
    <property type="term" value="F:phosphoglycerate mutase activity"/>
    <property type="evidence" value="ECO:0007669"/>
    <property type="project" value="UniProtKB-EC"/>
</dbReference>
<dbReference type="GO" id="GO:0006007">
    <property type="term" value="P:glucose catabolic process"/>
    <property type="evidence" value="ECO:0007669"/>
    <property type="project" value="InterPro"/>
</dbReference>
<dbReference type="GO" id="GO:0006096">
    <property type="term" value="P:glycolytic process"/>
    <property type="evidence" value="ECO:0007669"/>
    <property type="project" value="UniProtKB-UniRule"/>
</dbReference>
<dbReference type="CDD" id="cd16010">
    <property type="entry name" value="iPGM"/>
    <property type="match status" value="1"/>
</dbReference>
<dbReference type="FunFam" id="3.40.1450.10:FF:000001">
    <property type="entry name" value="2,3-bisphosphoglycerate-independent phosphoglycerate mutase"/>
    <property type="match status" value="1"/>
</dbReference>
<dbReference type="FunFam" id="3.40.720.10:FF:000001">
    <property type="entry name" value="2,3-bisphosphoglycerate-independent phosphoglycerate mutase"/>
    <property type="match status" value="1"/>
</dbReference>
<dbReference type="Gene3D" id="3.40.720.10">
    <property type="entry name" value="Alkaline Phosphatase, subunit A"/>
    <property type="match status" value="1"/>
</dbReference>
<dbReference type="Gene3D" id="3.40.1450.10">
    <property type="entry name" value="BPG-independent phosphoglycerate mutase, domain B"/>
    <property type="match status" value="1"/>
</dbReference>
<dbReference type="HAMAP" id="MF_01038">
    <property type="entry name" value="GpmI"/>
    <property type="match status" value="1"/>
</dbReference>
<dbReference type="InterPro" id="IPR017850">
    <property type="entry name" value="Alkaline_phosphatase_core_sf"/>
</dbReference>
<dbReference type="InterPro" id="IPR011258">
    <property type="entry name" value="BPG-indep_PGM_N"/>
</dbReference>
<dbReference type="InterPro" id="IPR006124">
    <property type="entry name" value="Metalloenzyme"/>
</dbReference>
<dbReference type="InterPro" id="IPR036646">
    <property type="entry name" value="PGAM_B_sf"/>
</dbReference>
<dbReference type="InterPro" id="IPR005995">
    <property type="entry name" value="Pgm_bpd_ind"/>
</dbReference>
<dbReference type="NCBIfam" id="TIGR01307">
    <property type="entry name" value="pgm_bpd_ind"/>
    <property type="match status" value="1"/>
</dbReference>
<dbReference type="NCBIfam" id="NF003897">
    <property type="entry name" value="PRK05434.1-5"/>
    <property type="match status" value="1"/>
</dbReference>
<dbReference type="PANTHER" id="PTHR31637">
    <property type="entry name" value="2,3-BISPHOSPHOGLYCERATE-INDEPENDENT PHOSPHOGLYCERATE MUTASE"/>
    <property type="match status" value="1"/>
</dbReference>
<dbReference type="PANTHER" id="PTHR31637:SF0">
    <property type="entry name" value="2,3-BISPHOSPHOGLYCERATE-INDEPENDENT PHOSPHOGLYCERATE MUTASE"/>
    <property type="match status" value="1"/>
</dbReference>
<dbReference type="Pfam" id="PF06415">
    <property type="entry name" value="iPGM_N"/>
    <property type="match status" value="1"/>
</dbReference>
<dbReference type="Pfam" id="PF01676">
    <property type="entry name" value="Metalloenzyme"/>
    <property type="match status" value="1"/>
</dbReference>
<dbReference type="PIRSF" id="PIRSF001492">
    <property type="entry name" value="IPGAM"/>
    <property type="match status" value="1"/>
</dbReference>
<dbReference type="SUPFAM" id="SSF64158">
    <property type="entry name" value="2,3-Bisphosphoglycerate-independent phosphoglycerate mutase, substrate-binding domain"/>
    <property type="match status" value="1"/>
</dbReference>
<dbReference type="SUPFAM" id="SSF53649">
    <property type="entry name" value="Alkaline phosphatase-like"/>
    <property type="match status" value="1"/>
</dbReference>
<sequence length="510" mass="55447">MSAKKPMALVILDGYGHRETQADNAITNANTPVLDGLMANQPNTLISASGMDVGLPDGQMGNSEVGHTNIGAGRVVYQDLTRITKAISDGEFQQNETLVNAIDKAVKAGKAVHIMGLMSPGGVHSHEDHIYAAVEMAAARGAEKIYLHCFLDGRDTPPRSAENSLKNFQELFAKLGKGRIASLVGRYYAMDRDNNWERVQKAYDLMTEAKAEFTFATAVEGLEAAYAREENDEFVQATEIKAEGEESAAIVDGDAVIFMNYRADRARQITRTFVPSFDGFTRNVFPAIDFVMLTQYAADIPLLCAFAPASLENTYGEWLSKEGKTQLRISETEKYAHVTFFFNGGIEDEFEGEERQLVASPKVATYDLQPEMSAPELTEKLVAAIKSGKYDAIVCNFPNCDMVGHTGVYDATVKAVESLDECIGKVVEAIKEVDGQLLITADHGNAEMMIDPETGGVHTAHTNLPVPLIYVGSKAIEFKEGGKLSDLAPTMLALTDTAIPAEMSGEVLFK</sequence>
<protein>
    <recommendedName>
        <fullName evidence="1">2,3-bisphosphoglycerate-independent phosphoglycerate mutase</fullName>
        <shortName evidence="1">BPG-independent PGAM</shortName>
        <shortName evidence="1">Phosphoglyceromutase</shortName>
        <shortName evidence="1">iPGM</shortName>
        <ecNumber evidence="1">5.4.2.12</ecNumber>
    </recommendedName>
</protein>